<sequence>MTLPASPPRYAVIGNPIAHSRSPQIHAMFSAQTGRPLRYERLLAPVDGFLPTVQAFRESGGLGLNVTVPFKLEAYALAEARLSERARLAGAVNTLSWRDGAWHGCNTDGVGLVNDLLRLGVALAGARVLLVGAGGAARGVLQPLAAAGCARIHIVNRTAARAAELAAAWRAAAPRTGTQVSAGALAQAAEPGGWDVAINATASSLQDAAPDLPGGLYAPDALAYDMMYGARPTAFMRQAEADGAARCADGLGMLVGQAAESFHIWHGVRPDPGPVLLALRTELLAAG</sequence>
<dbReference type="EC" id="1.1.1.25" evidence="1"/>
<dbReference type="EMBL" id="BX640435">
    <property type="protein sequence ID" value="CAE39207.1"/>
    <property type="molecule type" value="Genomic_DNA"/>
</dbReference>
<dbReference type="RefSeq" id="WP_010929310.1">
    <property type="nucleotide sequence ID" value="NC_002928.3"/>
</dbReference>
<dbReference type="SMR" id="Q7W3V3"/>
<dbReference type="GeneID" id="93205723"/>
<dbReference type="KEGG" id="bpa:BPP3924"/>
<dbReference type="HOGENOM" id="CLU_044063_2_1_4"/>
<dbReference type="UniPathway" id="UPA00053">
    <property type="reaction ID" value="UER00087"/>
</dbReference>
<dbReference type="Proteomes" id="UP000001421">
    <property type="component" value="Chromosome"/>
</dbReference>
<dbReference type="GO" id="GO:0005829">
    <property type="term" value="C:cytosol"/>
    <property type="evidence" value="ECO:0007669"/>
    <property type="project" value="TreeGrafter"/>
</dbReference>
<dbReference type="GO" id="GO:0050661">
    <property type="term" value="F:NADP binding"/>
    <property type="evidence" value="ECO:0007669"/>
    <property type="project" value="InterPro"/>
</dbReference>
<dbReference type="GO" id="GO:0004764">
    <property type="term" value="F:shikimate 3-dehydrogenase (NADP+) activity"/>
    <property type="evidence" value="ECO:0007669"/>
    <property type="project" value="UniProtKB-UniRule"/>
</dbReference>
<dbReference type="GO" id="GO:0008652">
    <property type="term" value="P:amino acid biosynthetic process"/>
    <property type="evidence" value="ECO:0007669"/>
    <property type="project" value="UniProtKB-KW"/>
</dbReference>
<dbReference type="GO" id="GO:0009073">
    <property type="term" value="P:aromatic amino acid family biosynthetic process"/>
    <property type="evidence" value="ECO:0007669"/>
    <property type="project" value="UniProtKB-KW"/>
</dbReference>
<dbReference type="GO" id="GO:0009423">
    <property type="term" value="P:chorismate biosynthetic process"/>
    <property type="evidence" value="ECO:0007669"/>
    <property type="project" value="UniProtKB-UniRule"/>
</dbReference>
<dbReference type="GO" id="GO:0019632">
    <property type="term" value="P:shikimate metabolic process"/>
    <property type="evidence" value="ECO:0007669"/>
    <property type="project" value="InterPro"/>
</dbReference>
<dbReference type="CDD" id="cd01065">
    <property type="entry name" value="NAD_bind_Shikimate_DH"/>
    <property type="match status" value="1"/>
</dbReference>
<dbReference type="FunFam" id="3.40.50.10860:FF:000006">
    <property type="entry name" value="Shikimate dehydrogenase (NADP(+))"/>
    <property type="match status" value="1"/>
</dbReference>
<dbReference type="Gene3D" id="3.40.50.10860">
    <property type="entry name" value="Leucine Dehydrogenase, chain A, domain 1"/>
    <property type="match status" value="1"/>
</dbReference>
<dbReference type="Gene3D" id="3.40.50.720">
    <property type="entry name" value="NAD(P)-binding Rossmann-like Domain"/>
    <property type="match status" value="1"/>
</dbReference>
<dbReference type="HAMAP" id="MF_00222">
    <property type="entry name" value="Shikimate_DH_AroE"/>
    <property type="match status" value="1"/>
</dbReference>
<dbReference type="InterPro" id="IPR046346">
    <property type="entry name" value="Aminoacid_DH-like_N_sf"/>
</dbReference>
<dbReference type="InterPro" id="IPR036291">
    <property type="entry name" value="NAD(P)-bd_dom_sf"/>
</dbReference>
<dbReference type="InterPro" id="IPR041121">
    <property type="entry name" value="SDH_C"/>
</dbReference>
<dbReference type="InterPro" id="IPR011342">
    <property type="entry name" value="Shikimate_DH"/>
</dbReference>
<dbReference type="InterPro" id="IPR013708">
    <property type="entry name" value="Shikimate_DH-bd_N"/>
</dbReference>
<dbReference type="InterPro" id="IPR022893">
    <property type="entry name" value="Shikimate_DH_fam"/>
</dbReference>
<dbReference type="InterPro" id="IPR006151">
    <property type="entry name" value="Shikm_DH/Glu-tRNA_Rdtase"/>
</dbReference>
<dbReference type="NCBIfam" id="TIGR00507">
    <property type="entry name" value="aroE"/>
    <property type="match status" value="1"/>
</dbReference>
<dbReference type="NCBIfam" id="NF001310">
    <property type="entry name" value="PRK00258.1-2"/>
    <property type="match status" value="1"/>
</dbReference>
<dbReference type="PANTHER" id="PTHR21089:SF1">
    <property type="entry name" value="BIFUNCTIONAL 3-DEHYDROQUINATE DEHYDRATASE_SHIKIMATE DEHYDROGENASE, CHLOROPLASTIC"/>
    <property type="match status" value="1"/>
</dbReference>
<dbReference type="PANTHER" id="PTHR21089">
    <property type="entry name" value="SHIKIMATE DEHYDROGENASE"/>
    <property type="match status" value="1"/>
</dbReference>
<dbReference type="Pfam" id="PF18317">
    <property type="entry name" value="SDH_C"/>
    <property type="match status" value="1"/>
</dbReference>
<dbReference type="Pfam" id="PF01488">
    <property type="entry name" value="Shikimate_DH"/>
    <property type="match status" value="1"/>
</dbReference>
<dbReference type="Pfam" id="PF08501">
    <property type="entry name" value="Shikimate_dh_N"/>
    <property type="match status" value="1"/>
</dbReference>
<dbReference type="SUPFAM" id="SSF53223">
    <property type="entry name" value="Aminoacid dehydrogenase-like, N-terminal domain"/>
    <property type="match status" value="1"/>
</dbReference>
<dbReference type="SUPFAM" id="SSF51735">
    <property type="entry name" value="NAD(P)-binding Rossmann-fold domains"/>
    <property type="match status" value="1"/>
</dbReference>
<accession>Q7W3V3</accession>
<reference key="1">
    <citation type="journal article" date="2003" name="Nat. Genet.">
        <title>Comparative analysis of the genome sequences of Bordetella pertussis, Bordetella parapertussis and Bordetella bronchiseptica.</title>
        <authorList>
            <person name="Parkhill J."/>
            <person name="Sebaihia M."/>
            <person name="Preston A."/>
            <person name="Murphy L.D."/>
            <person name="Thomson N.R."/>
            <person name="Harris D.E."/>
            <person name="Holden M.T.G."/>
            <person name="Churcher C.M."/>
            <person name="Bentley S.D."/>
            <person name="Mungall K.L."/>
            <person name="Cerdeno-Tarraga A.-M."/>
            <person name="Temple L."/>
            <person name="James K.D."/>
            <person name="Harris B."/>
            <person name="Quail M.A."/>
            <person name="Achtman M."/>
            <person name="Atkin R."/>
            <person name="Baker S."/>
            <person name="Basham D."/>
            <person name="Bason N."/>
            <person name="Cherevach I."/>
            <person name="Chillingworth T."/>
            <person name="Collins M."/>
            <person name="Cronin A."/>
            <person name="Davis P."/>
            <person name="Doggett J."/>
            <person name="Feltwell T."/>
            <person name="Goble A."/>
            <person name="Hamlin N."/>
            <person name="Hauser H."/>
            <person name="Holroyd S."/>
            <person name="Jagels K."/>
            <person name="Leather S."/>
            <person name="Moule S."/>
            <person name="Norberczak H."/>
            <person name="O'Neil S."/>
            <person name="Ormond D."/>
            <person name="Price C."/>
            <person name="Rabbinowitsch E."/>
            <person name="Rutter S."/>
            <person name="Sanders M."/>
            <person name="Saunders D."/>
            <person name="Seeger K."/>
            <person name="Sharp S."/>
            <person name="Simmonds M."/>
            <person name="Skelton J."/>
            <person name="Squares R."/>
            <person name="Squares S."/>
            <person name="Stevens K."/>
            <person name="Unwin L."/>
            <person name="Whitehead S."/>
            <person name="Barrell B.G."/>
            <person name="Maskell D.J."/>
        </authorList>
    </citation>
    <scope>NUCLEOTIDE SEQUENCE [LARGE SCALE GENOMIC DNA]</scope>
    <source>
        <strain>12822 / ATCC BAA-587 / NCTC 13253</strain>
    </source>
</reference>
<name>AROE_BORPA</name>
<comment type="function">
    <text evidence="1">Involved in the biosynthesis of the chorismate, which leads to the biosynthesis of aromatic amino acids. Catalyzes the reversible NADPH linked reduction of 3-dehydroshikimate (DHSA) to yield shikimate (SA).</text>
</comment>
<comment type="catalytic activity">
    <reaction evidence="1">
        <text>shikimate + NADP(+) = 3-dehydroshikimate + NADPH + H(+)</text>
        <dbReference type="Rhea" id="RHEA:17737"/>
        <dbReference type="ChEBI" id="CHEBI:15378"/>
        <dbReference type="ChEBI" id="CHEBI:16630"/>
        <dbReference type="ChEBI" id="CHEBI:36208"/>
        <dbReference type="ChEBI" id="CHEBI:57783"/>
        <dbReference type="ChEBI" id="CHEBI:58349"/>
        <dbReference type="EC" id="1.1.1.25"/>
    </reaction>
</comment>
<comment type="pathway">
    <text evidence="1">Metabolic intermediate biosynthesis; chorismate biosynthesis; chorismate from D-erythrose 4-phosphate and phosphoenolpyruvate: step 4/7.</text>
</comment>
<comment type="subunit">
    <text evidence="1">Homodimer.</text>
</comment>
<comment type="similarity">
    <text evidence="1">Belongs to the shikimate dehydrogenase family.</text>
</comment>
<feature type="chain" id="PRO_0000325107" description="Shikimate dehydrogenase (NADP(+))">
    <location>
        <begin position="1"/>
        <end position="287"/>
    </location>
</feature>
<feature type="active site" description="Proton acceptor" evidence="1">
    <location>
        <position position="71"/>
    </location>
</feature>
<feature type="binding site" evidence="1">
    <location>
        <begin position="20"/>
        <end position="22"/>
    </location>
    <ligand>
        <name>shikimate</name>
        <dbReference type="ChEBI" id="CHEBI:36208"/>
    </ligand>
</feature>
<feature type="binding site" evidence="1">
    <location>
        <position position="67"/>
    </location>
    <ligand>
        <name>shikimate</name>
        <dbReference type="ChEBI" id="CHEBI:36208"/>
    </ligand>
</feature>
<feature type="binding site" evidence="1">
    <location>
        <position position="84"/>
    </location>
    <ligand>
        <name>NADP(+)</name>
        <dbReference type="ChEBI" id="CHEBI:58349"/>
    </ligand>
</feature>
<feature type="binding site" evidence="1">
    <location>
        <position position="93"/>
    </location>
    <ligand>
        <name>shikimate</name>
        <dbReference type="ChEBI" id="CHEBI:36208"/>
    </ligand>
</feature>
<feature type="binding site" evidence="1">
    <location>
        <position position="108"/>
    </location>
    <ligand>
        <name>shikimate</name>
        <dbReference type="ChEBI" id="CHEBI:36208"/>
    </ligand>
</feature>
<feature type="binding site" evidence="1">
    <location>
        <begin position="132"/>
        <end position="136"/>
    </location>
    <ligand>
        <name>NADP(+)</name>
        <dbReference type="ChEBI" id="CHEBI:58349"/>
    </ligand>
</feature>
<feature type="binding site" evidence="1">
    <location>
        <begin position="156"/>
        <end position="161"/>
    </location>
    <ligand>
        <name>NADP(+)</name>
        <dbReference type="ChEBI" id="CHEBI:58349"/>
    </ligand>
</feature>
<feature type="binding site" evidence="1">
    <location>
        <position position="226"/>
    </location>
    <ligand>
        <name>NADP(+)</name>
        <dbReference type="ChEBI" id="CHEBI:58349"/>
    </ligand>
</feature>
<feature type="binding site" evidence="1">
    <location>
        <position position="228"/>
    </location>
    <ligand>
        <name>shikimate</name>
        <dbReference type="ChEBI" id="CHEBI:36208"/>
    </ligand>
</feature>
<feature type="binding site" evidence="1">
    <location>
        <position position="250"/>
    </location>
    <ligand>
        <name>NADP(+)</name>
        <dbReference type="ChEBI" id="CHEBI:58349"/>
    </ligand>
</feature>
<proteinExistence type="inferred from homology"/>
<protein>
    <recommendedName>
        <fullName evidence="1">Shikimate dehydrogenase (NADP(+))</fullName>
        <shortName evidence="1">SDH</shortName>
        <ecNumber evidence="1">1.1.1.25</ecNumber>
    </recommendedName>
</protein>
<evidence type="ECO:0000255" key="1">
    <source>
        <dbReference type="HAMAP-Rule" id="MF_00222"/>
    </source>
</evidence>
<gene>
    <name evidence="1" type="primary">aroE</name>
    <name type="ordered locus">BPP3924</name>
</gene>
<organism>
    <name type="scientific">Bordetella parapertussis (strain 12822 / ATCC BAA-587 / NCTC 13253)</name>
    <dbReference type="NCBI Taxonomy" id="257311"/>
    <lineage>
        <taxon>Bacteria</taxon>
        <taxon>Pseudomonadati</taxon>
        <taxon>Pseudomonadota</taxon>
        <taxon>Betaproteobacteria</taxon>
        <taxon>Burkholderiales</taxon>
        <taxon>Alcaligenaceae</taxon>
        <taxon>Bordetella</taxon>
    </lineage>
</organism>
<keyword id="KW-0028">Amino-acid biosynthesis</keyword>
<keyword id="KW-0057">Aromatic amino acid biosynthesis</keyword>
<keyword id="KW-0521">NADP</keyword>
<keyword id="KW-0560">Oxidoreductase</keyword>